<accession>A0Q4J4</accession>
<protein>
    <recommendedName>
        <fullName evidence="1">Large ribosomal subunit protein uL24</fullName>
    </recommendedName>
    <alternativeName>
        <fullName evidence="2">50S ribosomal protein L24</fullName>
    </alternativeName>
</protein>
<organism>
    <name type="scientific">Francisella tularensis subsp. novicida (strain U112)</name>
    <dbReference type="NCBI Taxonomy" id="401614"/>
    <lineage>
        <taxon>Bacteria</taxon>
        <taxon>Pseudomonadati</taxon>
        <taxon>Pseudomonadota</taxon>
        <taxon>Gammaproteobacteria</taxon>
        <taxon>Thiotrichales</taxon>
        <taxon>Francisellaceae</taxon>
        <taxon>Francisella</taxon>
    </lineage>
</organism>
<gene>
    <name evidence="1" type="primary">rplX</name>
    <name type="ordered locus">FTN_0250</name>
</gene>
<comment type="function">
    <text evidence="1">One of two assembly initiator proteins, it binds directly to the 5'-end of the 23S rRNA, where it nucleates assembly of the 50S subunit.</text>
</comment>
<comment type="function">
    <text evidence="1">One of the proteins that surrounds the polypeptide exit tunnel on the outside of the subunit.</text>
</comment>
<comment type="subunit">
    <text evidence="1">Part of the 50S ribosomal subunit.</text>
</comment>
<comment type="similarity">
    <text evidence="1">Belongs to the universal ribosomal protein uL24 family.</text>
</comment>
<dbReference type="EMBL" id="CP000439">
    <property type="protein sequence ID" value="ABK89159.1"/>
    <property type="molecule type" value="Genomic_DNA"/>
</dbReference>
<dbReference type="RefSeq" id="WP_003014349.1">
    <property type="nucleotide sequence ID" value="NZ_CP009633.1"/>
</dbReference>
<dbReference type="SMR" id="A0Q4J4"/>
<dbReference type="GeneID" id="75264250"/>
<dbReference type="KEGG" id="ftn:FTN_0250"/>
<dbReference type="KEGG" id="ftx:AW25_1792"/>
<dbReference type="BioCyc" id="FTUL401614:G1G75-261-MONOMER"/>
<dbReference type="Proteomes" id="UP000000762">
    <property type="component" value="Chromosome"/>
</dbReference>
<dbReference type="GO" id="GO:1990904">
    <property type="term" value="C:ribonucleoprotein complex"/>
    <property type="evidence" value="ECO:0007669"/>
    <property type="project" value="UniProtKB-KW"/>
</dbReference>
<dbReference type="GO" id="GO:0005840">
    <property type="term" value="C:ribosome"/>
    <property type="evidence" value="ECO:0007669"/>
    <property type="project" value="UniProtKB-KW"/>
</dbReference>
<dbReference type="GO" id="GO:0019843">
    <property type="term" value="F:rRNA binding"/>
    <property type="evidence" value="ECO:0007669"/>
    <property type="project" value="UniProtKB-UniRule"/>
</dbReference>
<dbReference type="GO" id="GO:0003735">
    <property type="term" value="F:structural constituent of ribosome"/>
    <property type="evidence" value="ECO:0007669"/>
    <property type="project" value="InterPro"/>
</dbReference>
<dbReference type="GO" id="GO:0006412">
    <property type="term" value="P:translation"/>
    <property type="evidence" value="ECO:0007669"/>
    <property type="project" value="UniProtKB-UniRule"/>
</dbReference>
<dbReference type="CDD" id="cd06089">
    <property type="entry name" value="KOW_RPL26"/>
    <property type="match status" value="1"/>
</dbReference>
<dbReference type="FunFam" id="2.30.30.30:FF:000004">
    <property type="entry name" value="50S ribosomal protein L24"/>
    <property type="match status" value="1"/>
</dbReference>
<dbReference type="Gene3D" id="2.30.30.30">
    <property type="match status" value="1"/>
</dbReference>
<dbReference type="HAMAP" id="MF_01326_B">
    <property type="entry name" value="Ribosomal_uL24_B"/>
    <property type="match status" value="1"/>
</dbReference>
<dbReference type="InterPro" id="IPR005824">
    <property type="entry name" value="KOW"/>
</dbReference>
<dbReference type="InterPro" id="IPR014722">
    <property type="entry name" value="Rib_uL2_dom2"/>
</dbReference>
<dbReference type="InterPro" id="IPR003256">
    <property type="entry name" value="Ribosomal_uL24"/>
</dbReference>
<dbReference type="InterPro" id="IPR005825">
    <property type="entry name" value="Ribosomal_uL24_CS"/>
</dbReference>
<dbReference type="InterPro" id="IPR041988">
    <property type="entry name" value="Ribosomal_uL24_KOW"/>
</dbReference>
<dbReference type="InterPro" id="IPR008991">
    <property type="entry name" value="Translation_prot_SH3-like_sf"/>
</dbReference>
<dbReference type="NCBIfam" id="TIGR01079">
    <property type="entry name" value="rplX_bact"/>
    <property type="match status" value="1"/>
</dbReference>
<dbReference type="PANTHER" id="PTHR12903">
    <property type="entry name" value="MITOCHONDRIAL RIBOSOMAL PROTEIN L24"/>
    <property type="match status" value="1"/>
</dbReference>
<dbReference type="Pfam" id="PF00467">
    <property type="entry name" value="KOW"/>
    <property type="match status" value="1"/>
</dbReference>
<dbReference type="Pfam" id="PF17136">
    <property type="entry name" value="ribosomal_L24"/>
    <property type="match status" value="1"/>
</dbReference>
<dbReference type="SUPFAM" id="SSF50104">
    <property type="entry name" value="Translation proteins SH3-like domain"/>
    <property type="match status" value="1"/>
</dbReference>
<dbReference type="PROSITE" id="PS01108">
    <property type="entry name" value="RIBOSOMAL_L24"/>
    <property type="match status" value="1"/>
</dbReference>
<reference key="1">
    <citation type="journal article" date="2007" name="Genome Biol.">
        <title>Comparison of Francisella tularensis genomes reveals evolutionary events associated with the emergence of human pathogenic strains.</title>
        <authorList>
            <person name="Rohmer L."/>
            <person name="Fong C."/>
            <person name="Abmayr S."/>
            <person name="Wasnick M."/>
            <person name="Larson Freeman T.J."/>
            <person name="Radey M."/>
            <person name="Guina T."/>
            <person name="Svensson K."/>
            <person name="Hayden H.S."/>
            <person name="Jacobs M."/>
            <person name="Gallagher L.A."/>
            <person name="Manoil C."/>
            <person name="Ernst R.K."/>
            <person name="Drees B."/>
            <person name="Buckley D."/>
            <person name="Haugen E."/>
            <person name="Bovee D."/>
            <person name="Zhou Y."/>
            <person name="Chang J."/>
            <person name="Levy R."/>
            <person name="Lim R."/>
            <person name="Gillett W."/>
            <person name="Guenthener D."/>
            <person name="Kang A."/>
            <person name="Shaffer S.A."/>
            <person name="Taylor G."/>
            <person name="Chen J."/>
            <person name="Gallis B."/>
            <person name="D'Argenio D.A."/>
            <person name="Forsman M."/>
            <person name="Olson M.V."/>
            <person name="Goodlett D.R."/>
            <person name="Kaul R."/>
            <person name="Miller S.I."/>
            <person name="Brittnacher M.J."/>
        </authorList>
    </citation>
    <scope>NUCLEOTIDE SEQUENCE [LARGE SCALE GENOMIC DNA]</scope>
    <source>
        <strain>U112</strain>
    </source>
</reference>
<keyword id="KW-0687">Ribonucleoprotein</keyword>
<keyword id="KW-0689">Ribosomal protein</keyword>
<keyword id="KW-0694">RNA-binding</keyword>
<keyword id="KW-0699">rRNA-binding</keyword>
<name>RL24_FRATN</name>
<proteinExistence type="inferred from homology"/>
<feature type="chain" id="PRO_1000052217" description="Large ribosomal subunit protein uL24">
    <location>
        <begin position="1"/>
        <end position="105"/>
    </location>
</feature>
<evidence type="ECO:0000255" key="1">
    <source>
        <dbReference type="HAMAP-Rule" id="MF_01326"/>
    </source>
</evidence>
<evidence type="ECO:0000305" key="2"/>
<sequence length="105" mass="11476">MNRLKKGDDVIVIAGKDKGRRGVVKSFAKGGSLVLVEGINIVKKHIKPNPNRGIEGGVVEKELPVDASNVAIFNPATEKADRVGYKFVDEKKVRYFKSNGELVDL</sequence>